<dbReference type="EC" id="2.1.2.1" evidence="1"/>
<dbReference type="EMBL" id="CP000141">
    <property type="protein sequence ID" value="ABB16083.1"/>
    <property type="molecule type" value="Genomic_DNA"/>
</dbReference>
<dbReference type="SMR" id="Q3A934"/>
<dbReference type="FunCoup" id="Q3A934">
    <property type="interactions" value="452"/>
</dbReference>
<dbReference type="STRING" id="246194.CHY_2557"/>
<dbReference type="KEGG" id="chy:CHY_2557"/>
<dbReference type="eggNOG" id="COG0112">
    <property type="taxonomic scope" value="Bacteria"/>
</dbReference>
<dbReference type="HOGENOM" id="CLU_022477_2_1_9"/>
<dbReference type="InParanoid" id="Q3A934"/>
<dbReference type="UniPathway" id="UPA00193"/>
<dbReference type="UniPathway" id="UPA00288">
    <property type="reaction ID" value="UER01023"/>
</dbReference>
<dbReference type="Proteomes" id="UP000002706">
    <property type="component" value="Chromosome"/>
</dbReference>
<dbReference type="GO" id="GO:0005829">
    <property type="term" value="C:cytosol"/>
    <property type="evidence" value="ECO:0007669"/>
    <property type="project" value="TreeGrafter"/>
</dbReference>
<dbReference type="GO" id="GO:0004372">
    <property type="term" value="F:glycine hydroxymethyltransferase activity"/>
    <property type="evidence" value="ECO:0007669"/>
    <property type="project" value="UniProtKB-UniRule"/>
</dbReference>
<dbReference type="GO" id="GO:0030170">
    <property type="term" value="F:pyridoxal phosphate binding"/>
    <property type="evidence" value="ECO:0007669"/>
    <property type="project" value="UniProtKB-UniRule"/>
</dbReference>
<dbReference type="GO" id="GO:0019264">
    <property type="term" value="P:glycine biosynthetic process from serine"/>
    <property type="evidence" value="ECO:0007669"/>
    <property type="project" value="UniProtKB-UniRule"/>
</dbReference>
<dbReference type="GO" id="GO:0035999">
    <property type="term" value="P:tetrahydrofolate interconversion"/>
    <property type="evidence" value="ECO:0007669"/>
    <property type="project" value="UniProtKB-UniRule"/>
</dbReference>
<dbReference type="CDD" id="cd00378">
    <property type="entry name" value="SHMT"/>
    <property type="match status" value="1"/>
</dbReference>
<dbReference type="FunFam" id="3.40.640.10:FF:000001">
    <property type="entry name" value="Serine hydroxymethyltransferase"/>
    <property type="match status" value="1"/>
</dbReference>
<dbReference type="FunFam" id="3.90.1150.10:FF:000003">
    <property type="entry name" value="Serine hydroxymethyltransferase"/>
    <property type="match status" value="1"/>
</dbReference>
<dbReference type="Gene3D" id="3.90.1150.10">
    <property type="entry name" value="Aspartate Aminotransferase, domain 1"/>
    <property type="match status" value="1"/>
</dbReference>
<dbReference type="Gene3D" id="3.40.640.10">
    <property type="entry name" value="Type I PLP-dependent aspartate aminotransferase-like (Major domain)"/>
    <property type="match status" value="1"/>
</dbReference>
<dbReference type="HAMAP" id="MF_00051">
    <property type="entry name" value="SHMT"/>
    <property type="match status" value="1"/>
</dbReference>
<dbReference type="InterPro" id="IPR015424">
    <property type="entry name" value="PyrdxlP-dep_Trfase"/>
</dbReference>
<dbReference type="InterPro" id="IPR015421">
    <property type="entry name" value="PyrdxlP-dep_Trfase_major"/>
</dbReference>
<dbReference type="InterPro" id="IPR015422">
    <property type="entry name" value="PyrdxlP-dep_Trfase_small"/>
</dbReference>
<dbReference type="InterPro" id="IPR001085">
    <property type="entry name" value="Ser_HO-MeTrfase"/>
</dbReference>
<dbReference type="InterPro" id="IPR049943">
    <property type="entry name" value="Ser_HO-MeTrfase-like"/>
</dbReference>
<dbReference type="InterPro" id="IPR019798">
    <property type="entry name" value="Ser_HO-MeTrfase_PLP_BS"/>
</dbReference>
<dbReference type="InterPro" id="IPR039429">
    <property type="entry name" value="SHMT-like_dom"/>
</dbReference>
<dbReference type="NCBIfam" id="NF000586">
    <property type="entry name" value="PRK00011.1"/>
    <property type="match status" value="1"/>
</dbReference>
<dbReference type="PANTHER" id="PTHR11680">
    <property type="entry name" value="SERINE HYDROXYMETHYLTRANSFERASE"/>
    <property type="match status" value="1"/>
</dbReference>
<dbReference type="PANTHER" id="PTHR11680:SF35">
    <property type="entry name" value="SERINE HYDROXYMETHYLTRANSFERASE 1"/>
    <property type="match status" value="1"/>
</dbReference>
<dbReference type="Pfam" id="PF00464">
    <property type="entry name" value="SHMT"/>
    <property type="match status" value="1"/>
</dbReference>
<dbReference type="PIRSF" id="PIRSF000412">
    <property type="entry name" value="SHMT"/>
    <property type="match status" value="1"/>
</dbReference>
<dbReference type="SUPFAM" id="SSF53383">
    <property type="entry name" value="PLP-dependent transferases"/>
    <property type="match status" value="1"/>
</dbReference>
<dbReference type="PROSITE" id="PS00096">
    <property type="entry name" value="SHMT"/>
    <property type="match status" value="1"/>
</dbReference>
<name>GLYA_CARHZ</name>
<proteinExistence type="inferred from homology"/>
<evidence type="ECO:0000255" key="1">
    <source>
        <dbReference type="HAMAP-Rule" id="MF_00051"/>
    </source>
</evidence>
<protein>
    <recommendedName>
        <fullName evidence="1">Serine hydroxymethyltransferase</fullName>
        <shortName evidence="1">SHMT</shortName>
        <shortName evidence="1">Serine methylase</shortName>
        <ecNumber evidence="1">2.1.2.1</ecNumber>
    </recommendedName>
</protein>
<sequence length="421" mass="46376">MTHLNLRLKDVDPEIFEAMEKELSRQREKIELIASENFVSRAVMEAMGSHLTNKYAEGLPGKRYYGGCEYVDVVENLARERAKKLFGAEHVNVQPHSGAQANMAAYMAFLEPGDTVLGMNLAHGGHLTHGSPVNFSGKLYNFVSYGVEPDTEKINYEKVFELAYKHKPKMIVAGASAYPRVIDFKHLKEIADEVGAYLMVDMAHIAGLVAAGLHPSPIPYADVVTTTTHKTLRGPRGGVIFCKAEHAAKIDKTVFPGVQGGPLMHVIAAKAVAFKEALSPEFREYQQQVVNNAKALAEELKKQGLRLVSGGTDNHLMLVDVRPVGLTGKRAEQLLDEIGVTVNKNAIPYDPESPNVTSGIRIGTPAVTTRGMKEGEMAEIAEIIALVLKNPENEDKHREAARKVRDLLNRFPLYDKLPYND</sequence>
<organism>
    <name type="scientific">Carboxydothermus hydrogenoformans (strain ATCC BAA-161 / DSM 6008 / Z-2901)</name>
    <dbReference type="NCBI Taxonomy" id="246194"/>
    <lineage>
        <taxon>Bacteria</taxon>
        <taxon>Bacillati</taxon>
        <taxon>Bacillota</taxon>
        <taxon>Clostridia</taxon>
        <taxon>Thermoanaerobacterales</taxon>
        <taxon>Thermoanaerobacteraceae</taxon>
        <taxon>Carboxydothermus</taxon>
    </lineage>
</organism>
<accession>Q3A934</accession>
<reference key="1">
    <citation type="journal article" date="2005" name="PLoS Genet.">
        <title>Life in hot carbon monoxide: the complete genome sequence of Carboxydothermus hydrogenoformans Z-2901.</title>
        <authorList>
            <person name="Wu M."/>
            <person name="Ren Q."/>
            <person name="Durkin A.S."/>
            <person name="Daugherty S.C."/>
            <person name="Brinkac L.M."/>
            <person name="Dodson R.J."/>
            <person name="Madupu R."/>
            <person name="Sullivan S.A."/>
            <person name="Kolonay J.F."/>
            <person name="Nelson W.C."/>
            <person name="Tallon L.J."/>
            <person name="Jones K.M."/>
            <person name="Ulrich L.E."/>
            <person name="Gonzalez J.M."/>
            <person name="Zhulin I.B."/>
            <person name="Robb F.T."/>
            <person name="Eisen J.A."/>
        </authorList>
    </citation>
    <scope>NUCLEOTIDE SEQUENCE [LARGE SCALE GENOMIC DNA]</scope>
    <source>
        <strain>ATCC BAA-161 / DSM 6008 / Z-2901</strain>
    </source>
</reference>
<feature type="chain" id="PRO_0000234962" description="Serine hydroxymethyltransferase">
    <location>
        <begin position="1"/>
        <end position="421"/>
    </location>
</feature>
<feature type="binding site" evidence="1">
    <location>
        <position position="121"/>
    </location>
    <ligand>
        <name>(6S)-5,6,7,8-tetrahydrofolate</name>
        <dbReference type="ChEBI" id="CHEBI:57453"/>
    </ligand>
</feature>
<feature type="binding site" evidence="1">
    <location>
        <begin position="125"/>
        <end position="127"/>
    </location>
    <ligand>
        <name>(6S)-5,6,7,8-tetrahydrofolate</name>
        <dbReference type="ChEBI" id="CHEBI:57453"/>
    </ligand>
</feature>
<feature type="site" description="Plays an important role in substrate specificity" evidence="1">
    <location>
        <position position="229"/>
    </location>
</feature>
<feature type="modified residue" description="N6-(pyridoxal phosphate)lysine" evidence="1">
    <location>
        <position position="230"/>
    </location>
</feature>
<comment type="function">
    <text evidence="1">Catalyzes the reversible interconversion of serine and glycine with tetrahydrofolate (THF) serving as the one-carbon carrier. This reaction serves as the major source of one-carbon groups required for the biosynthesis of purines, thymidylate, methionine, and other important biomolecules. Also exhibits THF-independent aldolase activity toward beta-hydroxyamino acids, producing glycine and aldehydes, via a retro-aldol mechanism.</text>
</comment>
<comment type="catalytic activity">
    <reaction evidence="1">
        <text>(6R)-5,10-methylene-5,6,7,8-tetrahydrofolate + glycine + H2O = (6S)-5,6,7,8-tetrahydrofolate + L-serine</text>
        <dbReference type="Rhea" id="RHEA:15481"/>
        <dbReference type="ChEBI" id="CHEBI:15377"/>
        <dbReference type="ChEBI" id="CHEBI:15636"/>
        <dbReference type="ChEBI" id="CHEBI:33384"/>
        <dbReference type="ChEBI" id="CHEBI:57305"/>
        <dbReference type="ChEBI" id="CHEBI:57453"/>
        <dbReference type="EC" id="2.1.2.1"/>
    </reaction>
</comment>
<comment type="cofactor">
    <cofactor evidence="1">
        <name>pyridoxal 5'-phosphate</name>
        <dbReference type="ChEBI" id="CHEBI:597326"/>
    </cofactor>
</comment>
<comment type="pathway">
    <text evidence="1">One-carbon metabolism; tetrahydrofolate interconversion.</text>
</comment>
<comment type="pathway">
    <text evidence="1">Amino-acid biosynthesis; glycine biosynthesis; glycine from L-serine: step 1/1.</text>
</comment>
<comment type="subunit">
    <text evidence="1">Homodimer.</text>
</comment>
<comment type="subcellular location">
    <subcellularLocation>
        <location evidence="1">Cytoplasm</location>
    </subcellularLocation>
</comment>
<comment type="similarity">
    <text evidence="1">Belongs to the SHMT family.</text>
</comment>
<keyword id="KW-0028">Amino-acid biosynthesis</keyword>
<keyword id="KW-0963">Cytoplasm</keyword>
<keyword id="KW-0554">One-carbon metabolism</keyword>
<keyword id="KW-0663">Pyridoxal phosphate</keyword>
<keyword id="KW-1185">Reference proteome</keyword>
<keyword id="KW-0808">Transferase</keyword>
<gene>
    <name evidence="1" type="primary">glyA</name>
    <name type="ordered locus">CHY_2557</name>
</gene>